<keyword id="KW-0002">3D-structure</keyword>
<keyword id="KW-0173">Coenzyme A biosynthesis</keyword>
<keyword id="KW-0963">Cytoplasm</keyword>
<keyword id="KW-0436">Ligase</keyword>
<keyword id="KW-0539">Nucleus</keyword>
<keyword id="KW-1185">Reference proteome</keyword>
<dbReference type="EC" id="6.3.2.5"/>
<dbReference type="EMBL" id="Z46728">
    <property type="protein sequence ID" value="CAA86711.1"/>
    <property type="molecule type" value="Genomic_DNA"/>
</dbReference>
<dbReference type="EMBL" id="BK006942">
    <property type="protein sequence ID" value="DAA08469.2"/>
    <property type="molecule type" value="Genomic_DNA"/>
</dbReference>
<dbReference type="PIR" id="S49797">
    <property type="entry name" value="S49797"/>
</dbReference>
<dbReference type="RefSeq" id="NP_012183.2">
    <property type="nucleotide sequence ID" value="NM_001179431.2"/>
</dbReference>
<dbReference type="PDB" id="6AI8">
    <property type="method" value="X-ray"/>
    <property type="resolution" value="2.30 A"/>
    <property type="chains" value="A/B=1-365"/>
</dbReference>
<dbReference type="PDB" id="6AI9">
    <property type="method" value="X-ray"/>
    <property type="resolution" value="2.09 A"/>
    <property type="chains" value="A/B=1-365"/>
</dbReference>
<dbReference type="PDB" id="6AIK">
    <property type="method" value="X-ray"/>
    <property type="resolution" value="1.83 A"/>
    <property type="chains" value="A/B=1-365"/>
</dbReference>
<dbReference type="PDB" id="6AIM">
    <property type="method" value="X-ray"/>
    <property type="resolution" value="2.04 A"/>
    <property type="chains" value="A/B=1-365"/>
</dbReference>
<dbReference type="PDB" id="6AIP">
    <property type="method" value="X-ray"/>
    <property type="resolution" value="1.99 A"/>
    <property type="chains" value="A/B=1-365"/>
</dbReference>
<dbReference type="PDBsum" id="6AI8"/>
<dbReference type="PDBsum" id="6AI9"/>
<dbReference type="PDBsum" id="6AIK"/>
<dbReference type="PDBsum" id="6AIM"/>
<dbReference type="PDBsum" id="6AIP"/>
<dbReference type="SMR" id="P40506"/>
<dbReference type="BioGRID" id="34909">
    <property type="interactions" value="72"/>
</dbReference>
<dbReference type="ComplexPortal" id="CPX-396">
    <property type="entry name" value="Coenzyme A-synthesizing protein complex"/>
</dbReference>
<dbReference type="FunCoup" id="P40506">
    <property type="interactions" value="948"/>
</dbReference>
<dbReference type="IntAct" id="P40506">
    <property type="interactions" value="4"/>
</dbReference>
<dbReference type="STRING" id="4932.YIL083C"/>
<dbReference type="iPTMnet" id="P40506"/>
<dbReference type="PaxDb" id="4932-YIL083C"/>
<dbReference type="PeptideAtlas" id="P40506"/>
<dbReference type="EnsemblFungi" id="YIL083C_mRNA">
    <property type="protein sequence ID" value="YIL083C"/>
    <property type="gene ID" value="YIL083C"/>
</dbReference>
<dbReference type="GeneID" id="854726"/>
<dbReference type="KEGG" id="sce:YIL083C"/>
<dbReference type="AGR" id="SGD:S000001345"/>
<dbReference type="SGD" id="S000001345">
    <property type="gene designation" value="CAB2"/>
</dbReference>
<dbReference type="VEuPathDB" id="FungiDB:YIL083C"/>
<dbReference type="eggNOG" id="KOG2728">
    <property type="taxonomic scope" value="Eukaryota"/>
</dbReference>
<dbReference type="GeneTree" id="ENSGT00950000182834"/>
<dbReference type="HOGENOM" id="CLU_042326_1_0_1"/>
<dbReference type="InParanoid" id="P40506"/>
<dbReference type="OMA" id="LERYQHH"/>
<dbReference type="OrthoDB" id="70224at2759"/>
<dbReference type="BioCyc" id="MetaCyc:MONOMER3O-285"/>
<dbReference type="BioCyc" id="YEAST:MONOMER3O-285"/>
<dbReference type="Reactome" id="R-SCE-196783">
    <property type="pathway name" value="Coenzyme A biosynthesis"/>
</dbReference>
<dbReference type="UniPathway" id="UPA00241">
    <property type="reaction ID" value="UER00353"/>
</dbReference>
<dbReference type="BioGRID-ORCS" id="854726">
    <property type="hits" value="0 hits in 10 CRISPR screens"/>
</dbReference>
<dbReference type="PRO" id="PR:P40506"/>
<dbReference type="Proteomes" id="UP000002311">
    <property type="component" value="Chromosome IX"/>
</dbReference>
<dbReference type="RNAct" id="P40506">
    <property type="molecule type" value="protein"/>
</dbReference>
<dbReference type="GO" id="GO:1990143">
    <property type="term" value="C:CoA-synthesizing protein complex"/>
    <property type="evidence" value="ECO:0000314"/>
    <property type="project" value="SGD"/>
</dbReference>
<dbReference type="GO" id="GO:0005737">
    <property type="term" value="C:cytoplasm"/>
    <property type="evidence" value="ECO:0007005"/>
    <property type="project" value="SGD"/>
</dbReference>
<dbReference type="GO" id="GO:0005634">
    <property type="term" value="C:nucleus"/>
    <property type="evidence" value="ECO:0007005"/>
    <property type="project" value="SGD"/>
</dbReference>
<dbReference type="GO" id="GO:0004632">
    <property type="term" value="F:phosphopantothenate--cysteine ligase activity"/>
    <property type="evidence" value="ECO:0000314"/>
    <property type="project" value="SGD"/>
</dbReference>
<dbReference type="GO" id="GO:0015937">
    <property type="term" value="P:coenzyme A biosynthetic process"/>
    <property type="evidence" value="ECO:0000316"/>
    <property type="project" value="SGD"/>
</dbReference>
<dbReference type="FunFam" id="3.40.50.10300:FF:000002">
    <property type="entry name" value="Phosphopantothenate--cysteine ligase 2"/>
    <property type="match status" value="1"/>
</dbReference>
<dbReference type="Gene3D" id="3.40.50.10300">
    <property type="entry name" value="CoaB-like"/>
    <property type="match status" value="1"/>
</dbReference>
<dbReference type="InterPro" id="IPR035929">
    <property type="entry name" value="CoaB-like_sf"/>
</dbReference>
<dbReference type="InterPro" id="IPR007085">
    <property type="entry name" value="DNA/pantothenate-metab_flavo_C"/>
</dbReference>
<dbReference type="PANTHER" id="PTHR12290">
    <property type="entry name" value="CORNICHON-RELATED"/>
    <property type="match status" value="1"/>
</dbReference>
<dbReference type="Pfam" id="PF04127">
    <property type="entry name" value="DFP"/>
    <property type="match status" value="1"/>
</dbReference>
<dbReference type="SUPFAM" id="SSF102645">
    <property type="entry name" value="CoaB-like"/>
    <property type="match status" value="1"/>
</dbReference>
<name>PPCS_YEAST</name>
<accession>P40506</accession>
<accession>D6VVK3</accession>
<proteinExistence type="evidence at protein level"/>
<reference key="1">
    <citation type="journal article" date="1997" name="Nature">
        <title>The nucleotide sequence of Saccharomyces cerevisiae chromosome IX.</title>
        <authorList>
            <person name="Churcher C.M."/>
            <person name="Bowman S."/>
            <person name="Badcock K."/>
            <person name="Bankier A.T."/>
            <person name="Brown D."/>
            <person name="Chillingworth T."/>
            <person name="Connor R."/>
            <person name="Devlin K."/>
            <person name="Gentles S."/>
            <person name="Hamlin N."/>
            <person name="Harris D.E."/>
            <person name="Horsnell T."/>
            <person name="Hunt S."/>
            <person name="Jagels K."/>
            <person name="Jones M."/>
            <person name="Lye G."/>
            <person name="Moule S."/>
            <person name="Odell C."/>
            <person name="Pearson D."/>
            <person name="Rajandream M.A."/>
            <person name="Rice P."/>
            <person name="Rowley N."/>
            <person name="Skelton J."/>
            <person name="Smith V."/>
            <person name="Walsh S.V."/>
            <person name="Whitehead S."/>
            <person name="Barrell B.G."/>
        </authorList>
    </citation>
    <scope>NUCLEOTIDE SEQUENCE [LARGE SCALE GENOMIC DNA]</scope>
    <source>
        <strain>ATCC 204508 / S288c</strain>
    </source>
</reference>
<reference key="2">
    <citation type="journal article" date="2014" name="G3 (Bethesda)">
        <title>The reference genome sequence of Saccharomyces cerevisiae: Then and now.</title>
        <authorList>
            <person name="Engel S.R."/>
            <person name="Dietrich F.S."/>
            <person name="Fisk D.G."/>
            <person name="Binkley G."/>
            <person name="Balakrishnan R."/>
            <person name="Costanzo M.C."/>
            <person name="Dwight S.S."/>
            <person name="Hitz B.C."/>
            <person name="Karra K."/>
            <person name="Nash R.S."/>
            <person name="Weng S."/>
            <person name="Wong E.D."/>
            <person name="Lloyd P."/>
            <person name="Skrzypek M.S."/>
            <person name="Miyasato S.R."/>
            <person name="Simison M."/>
            <person name="Cherry J.M."/>
        </authorList>
    </citation>
    <scope>GENOME REANNOTATION</scope>
    <scope>SEQUENCE REVISION TO 338</scope>
    <source>
        <strain>ATCC 204508 / S288c</strain>
    </source>
</reference>
<reference key="3">
    <citation type="journal article" date="2003" name="Nature">
        <title>Global analysis of protein localization in budding yeast.</title>
        <authorList>
            <person name="Huh W.-K."/>
            <person name="Falvo J.V."/>
            <person name="Gerke L.C."/>
            <person name="Carroll A.S."/>
            <person name="Howson R.W."/>
            <person name="Weissman J.S."/>
            <person name="O'Shea E.K."/>
        </authorList>
    </citation>
    <scope>SUBCELLULAR LOCATION [LARGE SCALE ANALYSIS]</scope>
</reference>
<reference key="4">
    <citation type="journal article" date="2003" name="Nature">
        <title>Global analysis of protein expression in yeast.</title>
        <authorList>
            <person name="Ghaemmaghami S."/>
            <person name="Huh W.-K."/>
            <person name="Bower K."/>
            <person name="Howson R.W."/>
            <person name="Belle A."/>
            <person name="Dephoure N."/>
            <person name="O'Shea E.K."/>
            <person name="Weissman J.S."/>
        </authorList>
    </citation>
    <scope>LEVEL OF PROTEIN EXPRESSION [LARGE SCALE ANALYSIS]</scope>
</reference>
<reference key="5">
    <citation type="journal article" date="2009" name="Curr. Genet.">
        <title>Genetic analysis of coenzyme A biosynthesis in the yeast Saccharomyces cerevisiae: identification of a conditional mutation in the pantothenate kinase gene CAB1.</title>
        <authorList>
            <person name="Olzhausen J."/>
            <person name="Schuebbe S."/>
            <person name="Schueller H.-J."/>
        </authorList>
    </citation>
    <scope>FUNCTION</scope>
</reference>
<gene>
    <name type="primary">CAB2</name>
    <name type="ordered locus">YIL083C</name>
</gene>
<evidence type="ECO:0000256" key="1">
    <source>
        <dbReference type="SAM" id="MobiDB-lite"/>
    </source>
</evidence>
<evidence type="ECO:0000269" key="2">
    <source>
    </source>
</evidence>
<evidence type="ECO:0000269" key="3">
    <source>
    </source>
</evidence>
<evidence type="ECO:0000269" key="4">
    <source>
    </source>
</evidence>
<evidence type="ECO:0000305" key="5"/>
<evidence type="ECO:0007829" key="6">
    <source>
        <dbReference type="PDB" id="6AIK"/>
    </source>
</evidence>
<evidence type="ECO:0007829" key="7">
    <source>
        <dbReference type="PDB" id="6AIM"/>
    </source>
</evidence>
<comment type="function">
    <text evidence="4">Catalyzes the first step in the biosynthesis of coenzyme A from vitamin B5, where cysteine is conjugated to 4'-phosphopantothenate to form 4-phosphopantothenoylcysteine.</text>
</comment>
<comment type="catalytic activity">
    <reaction>
        <text>(R)-4'-phosphopantothenate + L-cysteine + CTP = N-[(R)-4-phosphopantothenoyl]-L-cysteine + CMP + diphosphate + H(+)</text>
        <dbReference type="Rhea" id="RHEA:19397"/>
        <dbReference type="ChEBI" id="CHEBI:10986"/>
        <dbReference type="ChEBI" id="CHEBI:15378"/>
        <dbReference type="ChEBI" id="CHEBI:33019"/>
        <dbReference type="ChEBI" id="CHEBI:35235"/>
        <dbReference type="ChEBI" id="CHEBI:37563"/>
        <dbReference type="ChEBI" id="CHEBI:59458"/>
        <dbReference type="ChEBI" id="CHEBI:60377"/>
        <dbReference type="EC" id="6.3.2.5"/>
    </reaction>
</comment>
<comment type="pathway">
    <text>Cofactor biosynthesis; coenzyme A biosynthesis; CoA from (R)-pantothenate: step 2/5.</text>
</comment>
<comment type="subunit">
    <text>Homodimer.</text>
</comment>
<comment type="interaction">
    <interactant intactId="EBI-25089">
        <id>P40506</id>
    </interactant>
    <interactant intactId="EBI-26778">
        <id>P36076</id>
        <label>CAB3</label>
    </interactant>
    <organismsDiffer>false</organismsDiffer>
    <experiments>6</experiments>
</comment>
<comment type="interaction">
    <interactant intactId="EBI-25089">
        <id>P40506</id>
    </interactant>
    <interactant intactId="EBI-23648">
        <id>P53332</id>
        <label>CAB4</label>
    </interactant>
    <organismsDiffer>false</organismsDiffer>
    <experiments>6</experiments>
</comment>
<comment type="subcellular location">
    <subcellularLocation>
        <location evidence="2">Cytoplasm</location>
    </subcellularLocation>
    <subcellularLocation>
        <location evidence="2">Nucleus</location>
    </subcellularLocation>
</comment>
<comment type="miscellaneous">
    <text evidence="3">Present with 3170 molecules/cell in log phase SD medium.</text>
</comment>
<comment type="similarity">
    <text evidence="5">Belongs to the PPC synthetase family.</text>
</comment>
<feature type="chain" id="PRO_0000182042" description="Phosphopantothenate--cysteine ligase CAB2">
    <location>
        <begin position="1"/>
        <end position="365"/>
    </location>
</feature>
<feature type="region of interest" description="Disordered" evidence="1">
    <location>
        <begin position="228"/>
        <end position="250"/>
    </location>
</feature>
<feature type="compositionally biased region" description="Polar residues" evidence="1">
    <location>
        <begin position="238"/>
        <end position="248"/>
    </location>
</feature>
<feature type="sequence conflict" description="In Ref. 1; CAA86711." evidence="5" ref="1">
    <original>S</original>
    <variation>I</variation>
    <location>
        <position position="338"/>
    </location>
</feature>
<feature type="helix" evidence="6">
    <location>
        <begin position="42"/>
        <end position="46"/>
    </location>
</feature>
<feature type="helix" evidence="6">
    <location>
        <begin position="53"/>
        <end position="69"/>
    </location>
</feature>
<feature type="strand" evidence="6">
    <location>
        <begin position="75"/>
        <end position="82"/>
    </location>
</feature>
<feature type="strand" evidence="6">
    <location>
        <begin position="84"/>
        <end position="90"/>
    </location>
</feature>
<feature type="strand" evidence="6">
    <location>
        <begin position="92"/>
        <end position="97"/>
    </location>
</feature>
<feature type="helix" evidence="6">
    <location>
        <begin position="102"/>
        <end position="113"/>
    </location>
</feature>
<feature type="strand" evidence="6">
    <location>
        <begin position="117"/>
        <end position="123"/>
    </location>
</feature>
<feature type="turn" evidence="6">
    <location>
        <begin position="129"/>
        <end position="131"/>
    </location>
</feature>
<feature type="helix" evidence="6">
    <location>
        <begin position="132"/>
        <end position="135"/>
    </location>
</feature>
<feature type="helix" evidence="6">
    <location>
        <begin position="142"/>
        <end position="145"/>
    </location>
</feature>
<feature type="strand" evidence="6">
    <location>
        <begin position="150"/>
        <end position="152"/>
    </location>
</feature>
<feature type="helix" evidence="6">
    <location>
        <begin position="154"/>
        <end position="171"/>
    </location>
</feature>
<feature type="strand" evidence="6">
    <location>
        <begin position="177"/>
        <end position="182"/>
    </location>
</feature>
<feature type="helix" evidence="6">
    <location>
        <begin position="185"/>
        <end position="196"/>
    </location>
</feature>
<feature type="helix" evidence="6">
    <location>
        <begin position="197"/>
        <end position="199"/>
    </location>
</feature>
<feature type="strand" evidence="6">
    <location>
        <begin position="204"/>
        <end position="208"/>
    </location>
</feature>
<feature type="strand" evidence="6">
    <location>
        <begin position="214"/>
        <end position="216"/>
    </location>
</feature>
<feature type="helix" evidence="6">
    <location>
        <begin position="219"/>
        <end position="221"/>
    </location>
</feature>
<feature type="strand" evidence="7">
    <location>
        <begin position="244"/>
        <end position="247"/>
    </location>
</feature>
<feature type="strand" evidence="6">
    <location>
        <begin position="253"/>
        <end position="259"/>
    </location>
</feature>
<feature type="helix" evidence="6">
    <location>
        <begin position="263"/>
        <end position="269"/>
    </location>
</feature>
<feature type="turn" evidence="6">
    <location>
        <begin position="270"/>
        <end position="274"/>
    </location>
</feature>
<feature type="strand" evidence="6">
    <location>
        <begin position="275"/>
        <end position="284"/>
    </location>
</feature>
<feature type="helix" evidence="6">
    <location>
        <begin position="286"/>
        <end position="300"/>
    </location>
</feature>
<feature type="strand" evidence="6">
    <location>
        <begin position="303"/>
        <end position="309"/>
    </location>
</feature>
<feature type="helix" evidence="6">
    <location>
        <begin position="310"/>
        <end position="312"/>
    </location>
</feature>
<feature type="turn" evidence="6">
    <location>
        <begin position="313"/>
        <end position="315"/>
    </location>
</feature>
<feature type="strand" evidence="6">
    <location>
        <begin position="316"/>
        <end position="321"/>
    </location>
</feature>
<feature type="strand" evidence="6">
    <location>
        <begin position="324"/>
        <end position="331"/>
    </location>
</feature>
<feature type="helix" evidence="6">
    <location>
        <begin position="340"/>
        <end position="359"/>
    </location>
</feature>
<organism>
    <name type="scientific">Saccharomyces cerevisiae (strain ATCC 204508 / S288c)</name>
    <name type="common">Baker's yeast</name>
    <dbReference type="NCBI Taxonomy" id="559292"/>
    <lineage>
        <taxon>Eukaryota</taxon>
        <taxon>Fungi</taxon>
        <taxon>Dikarya</taxon>
        <taxon>Ascomycota</taxon>
        <taxon>Saccharomycotina</taxon>
        <taxon>Saccharomycetes</taxon>
        <taxon>Saccharomycetales</taxon>
        <taxon>Saccharomycetaceae</taxon>
        <taxon>Saccharomyces</taxon>
    </lineage>
</organism>
<sequence>MPPLPVLNRPQIHTSVTEISHAIDRTIKEELFPVAYTTEEEQYFKTNPKPAYIDELIKDAKEFIDLQYSLKRNKIVLITSGGTTVPLENNTVRFIDNFSAGTRGASSAEQFLANGYSVIFLHREFSLTPYNRSFSHSINTLFLDYIDSEGKIKPEFAENVLKNKKLYDKYMEKEEKLLLLPFTTVNQYLWSLKSIAKLLNNSGCLFYLAAAVSDFFVPYSRLPQHKIQSGDNGKMGANNDTEGTTRTTPDGKLIVNLDPVPKFLRRLVESWATQAMIVSFKLETDESMLLYKCTQALDRYNHQLVIGNLLQTRNKQVIFVSPENRKGDWVRLDEKHHSIEEMIIPEVIARHDKWVAHSKTKLATK</sequence>
<protein>
    <recommendedName>
        <fullName>Phosphopantothenate--cysteine ligase CAB2</fullName>
        <ecNumber>6.3.2.5</ecNumber>
    </recommendedName>
    <alternativeName>
        <fullName>Coenzyme A biosynthesis protein 2</fullName>
    </alternativeName>
    <alternativeName>
        <fullName>Phosphopantothenoylcysteine synthetase</fullName>
        <shortName>PPC synthetase</shortName>
    </alternativeName>
</protein>